<name>RAN1_ARATH</name>
<evidence type="ECO:0000250" key="1"/>
<evidence type="ECO:0000250" key="2">
    <source>
        <dbReference type="UniProtKB" id="P62825"/>
    </source>
</evidence>
<evidence type="ECO:0000255" key="3">
    <source>
        <dbReference type="PROSITE-ProRule" id="PRU00752"/>
    </source>
</evidence>
<evidence type="ECO:0000269" key="4">
    <source>
    </source>
</evidence>
<evidence type="ECO:0000269" key="5">
    <source>
    </source>
</evidence>
<evidence type="ECO:0000269" key="6">
    <source>
    </source>
</evidence>
<evidence type="ECO:0000269" key="7">
    <source>
    </source>
</evidence>
<evidence type="ECO:0000269" key="8">
    <source>
    </source>
</evidence>
<evidence type="ECO:0000269" key="9">
    <source>
    </source>
</evidence>
<evidence type="ECO:0000269" key="10">
    <source>
    </source>
</evidence>
<evidence type="ECO:0000269" key="11">
    <source>
    </source>
</evidence>
<evidence type="ECO:0000305" key="12"/>
<organism>
    <name type="scientific">Arabidopsis thaliana</name>
    <name type="common">Mouse-ear cress</name>
    <dbReference type="NCBI Taxonomy" id="3702"/>
    <lineage>
        <taxon>Eukaryota</taxon>
        <taxon>Viridiplantae</taxon>
        <taxon>Streptophyta</taxon>
        <taxon>Embryophyta</taxon>
        <taxon>Tracheophyta</taxon>
        <taxon>Spermatophyta</taxon>
        <taxon>Magnoliopsida</taxon>
        <taxon>eudicotyledons</taxon>
        <taxon>Gunneridae</taxon>
        <taxon>Pentapetalae</taxon>
        <taxon>rosids</taxon>
        <taxon>malvids</taxon>
        <taxon>Brassicales</taxon>
        <taxon>Brassicaceae</taxon>
        <taxon>Camelineae</taxon>
        <taxon>Arabidopsis</taxon>
    </lineage>
</organism>
<reference key="1">
    <citation type="journal article" date="1994" name="Plant J.">
        <title>Phenotype of the fission yeast cell cycle regulatory mutant pim1-46 is suppressed by a tobacco cDNA encoding a small, Ran-like GTP-binding protein.</title>
        <authorList>
            <person name="Merkle T."/>
            <person name="Haizel T."/>
            <person name="Matsumoto T."/>
            <person name="Harter K."/>
            <person name="Dallmann G."/>
            <person name="Nagy F."/>
        </authorList>
    </citation>
    <scope>NUCLEOTIDE SEQUENCE [MRNA]</scope>
</reference>
<reference key="2">
    <citation type="journal article" date="1997" name="Plant J.">
        <title>Characterization of proteins that interact with the GTP-bound form of the regulatory GTPase Ran in Arabidopsis.</title>
        <authorList>
            <person name="Haizel T."/>
            <person name="Merkle T."/>
            <person name="Pay A."/>
            <person name="Fejes E."/>
            <person name="Nagy F."/>
        </authorList>
    </citation>
    <scope>NUCLEOTIDE SEQUENCE [MRNA]</scope>
    <scope>INTERACTION WITH RANBP1A AND RANBP1B</scope>
</reference>
<reference key="3">
    <citation type="journal article" date="2000" name="Nature">
        <title>Sequence and analysis of chromosome 5 of the plant Arabidopsis thaliana.</title>
        <authorList>
            <person name="Tabata S."/>
            <person name="Kaneko T."/>
            <person name="Nakamura Y."/>
            <person name="Kotani H."/>
            <person name="Kato T."/>
            <person name="Asamizu E."/>
            <person name="Miyajima N."/>
            <person name="Sasamoto S."/>
            <person name="Kimura T."/>
            <person name="Hosouchi T."/>
            <person name="Kawashima K."/>
            <person name="Kohara M."/>
            <person name="Matsumoto M."/>
            <person name="Matsuno A."/>
            <person name="Muraki A."/>
            <person name="Nakayama S."/>
            <person name="Nakazaki N."/>
            <person name="Naruo K."/>
            <person name="Okumura S."/>
            <person name="Shinpo S."/>
            <person name="Takeuchi C."/>
            <person name="Wada T."/>
            <person name="Watanabe A."/>
            <person name="Yamada M."/>
            <person name="Yasuda M."/>
            <person name="Sato S."/>
            <person name="de la Bastide M."/>
            <person name="Huang E."/>
            <person name="Spiegel L."/>
            <person name="Gnoj L."/>
            <person name="O'Shaughnessy A."/>
            <person name="Preston R."/>
            <person name="Habermann K."/>
            <person name="Murray J."/>
            <person name="Johnson D."/>
            <person name="Rohlfing T."/>
            <person name="Nelson J."/>
            <person name="Stoneking T."/>
            <person name="Pepin K."/>
            <person name="Spieth J."/>
            <person name="Sekhon M."/>
            <person name="Armstrong J."/>
            <person name="Becker M."/>
            <person name="Belter E."/>
            <person name="Cordum H."/>
            <person name="Cordes M."/>
            <person name="Courtney L."/>
            <person name="Courtney W."/>
            <person name="Dante M."/>
            <person name="Du H."/>
            <person name="Edwards J."/>
            <person name="Fryman J."/>
            <person name="Haakensen B."/>
            <person name="Lamar E."/>
            <person name="Latreille P."/>
            <person name="Leonard S."/>
            <person name="Meyer R."/>
            <person name="Mulvaney E."/>
            <person name="Ozersky P."/>
            <person name="Riley A."/>
            <person name="Strowmatt C."/>
            <person name="Wagner-McPherson C."/>
            <person name="Wollam A."/>
            <person name="Yoakum M."/>
            <person name="Bell M."/>
            <person name="Dedhia N."/>
            <person name="Parnell L."/>
            <person name="Shah R."/>
            <person name="Rodriguez M."/>
            <person name="Hoon See L."/>
            <person name="Vil D."/>
            <person name="Baker J."/>
            <person name="Kirchoff K."/>
            <person name="Toth K."/>
            <person name="King L."/>
            <person name="Bahret A."/>
            <person name="Miller B."/>
            <person name="Marra M.A."/>
            <person name="Martienssen R."/>
            <person name="McCombie W.R."/>
            <person name="Wilson R.K."/>
            <person name="Murphy G."/>
            <person name="Bancroft I."/>
            <person name="Volckaert G."/>
            <person name="Wambutt R."/>
            <person name="Duesterhoeft A."/>
            <person name="Stiekema W."/>
            <person name="Pohl T."/>
            <person name="Entian K.-D."/>
            <person name="Terryn N."/>
            <person name="Hartley N."/>
            <person name="Bent E."/>
            <person name="Johnson S."/>
            <person name="Langham S.-A."/>
            <person name="McCullagh B."/>
            <person name="Robben J."/>
            <person name="Grymonprez B."/>
            <person name="Zimmermann W."/>
            <person name="Ramsperger U."/>
            <person name="Wedler H."/>
            <person name="Balke K."/>
            <person name="Wedler E."/>
            <person name="Peters S."/>
            <person name="van Staveren M."/>
            <person name="Dirkse W."/>
            <person name="Mooijman P."/>
            <person name="Klein Lankhorst R."/>
            <person name="Weitzenegger T."/>
            <person name="Bothe G."/>
            <person name="Rose M."/>
            <person name="Hauf J."/>
            <person name="Berneiser S."/>
            <person name="Hempel S."/>
            <person name="Feldpausch M."/>
            <person name="Lamberth S."/>
            <person name="Villarroel R."/>
            <person name="Gielen J."/>
            <person name="Ardiles W."/>
            <person name="Bents O."/>
            <person name="Lemcke K."/>
            <person name="Kolesov G."/>
            <person name="Mayer K.F.X."/>
            <person name="Rudd S."/>
            <person name="Schoof H."/>
            <person name="Schueller C."/>
            <person name="Zaccaria P."/>
            <person name="Mewes H.-W."/>
            <person name="Bevan M."/>
            <person name="Fransz P.F."/>
        </authorList>
    </citation>
    <scope>NUCLEOTIDE SEQUENCE [LARGE SCALE GENOMIC DNA]</scope>
    <source>
        <strain>cv. Columbia</strain>
    </source>
</reference>
<reference key="4">
    <citation type="journal article" date="2017" name="Plant J.">
        <title>Araport11: a complete reannotation of the Arabidopsis thaliana reference genome.</title>
        <authorList>
            <person name="Cheng C.Y."/>
            <person name="Krishnakumar V."/>
            <person name="Chan A.P."/>
            <person name="Thibaud-Nissen F."/>
            <person name="Schobel S."/>
            <person name="Town C.D."/>
        </authorList>
    </citation>
    <scope>GENOME REANNOTATION</scope>
    <source>
        <strain>cv. Columbia</strain>
    </source>
</reference>
<reference key="5">
    <citation type="journal article" date="2003" name="Science">
        <title>Empirical analysis of transcriptional activity in the Arabidopsis genome.</title>
        <authorList>
            <person name="Yamada K."/>
            <person name="Lim J."/>
            <person name="Dale J.M."/>
            <person name="Chen H."/>
            <person name="Shinn P."/>
            <person name="Palm C.J."/>
            <person name="Southwick A.M."/>
            <person name="Wu H.C."/>
            <person name="Kim C.J."/>
            <person name="Nguyen M."/>
            <person name="Pham P.K."/>
            <person name="Cheuk R.F."/>
            <person name="Karlin-Newmann G."/>
            <person name="Liu S.X."/>
            <person name="Lam B."/>
            <person name="Sakano H."/>
            <person name="Wu T."/>
            <person name="Yu G."/>
            <person name="Miranda M."/>
            <person name="Quach H.L."/>
            <person name="Tripp M."/>
            <person name="Chang C.H."/>
            <person name="Lee J.M."/>
            <person name="Toriumi M.J."/>
            <person name="Chan M.M."/>
            <person name="Tang C.C."/>
            <person name="Onodera C.S."/>
            <person name="Deng J.M."/>
            <person name="Akiyama K."/>
            <person name="Ansari Y."/>
            <person name="Arakawa T."/>
            <person name="Banh J."/>
            <person name="Banno F."/>
            <person name="Bowser L."/>
            <person name="Brooks S.Y."/>
            <person name="Carninci P."/>
            <person name="Chao Q."/>
            <person name="Choy N."/>
            <person name="Enju A."/>
            <person name="Goldsmith A.D."/>
            <person name="Gurjal M."/>
            <person name="Hansen N.F."/>
            <person name="Hayashizaki Y."/>
            <person name="Johnson-Hopson C."/>
            <person name="Hsuan V.W."/>
            <person name="Iida K."/>
            <person name="Karnes M."/>
            <person name="Khan S."/>
            <person name="Koesema E."/>
            <person name="Ishida J."/>
            <person name="Jiang P.X."/>
            <person name="Jones T."/>
            <person name="Kawai J."/>
            <person name="Kamiya A."/>
            <person name="Meyers C."/>
            <person name="Nakajima M."/>
            <person name="Narusaka M."/>
            <person name="Seki M."/>
            <person name="Sakurai T."/>
            <person name="Satou M."/>
            <person name="Tamse R."/>
            <person name="Vaysberg M."/>
            <person name="Wallender E.K."/>
            <person name="Wong C."/>
            <person name="Yamamura Y."/>
            <person name="Yuan S."/>
            <person name="Shinozaki K."/>
            <person name="Davis R.W."/>
            <person name="Theologis A."/>
            <person name="Ecker J.R."/>
        </authorList>
    </citation>
    <scope>NUCLEOTIDE SEQUENCE [LARGE SCALE MRNA]</scope>
    <source>
        <strain>cv. Columbia</strain>
    </source>
</reference>
<reference key="6">
    <citation type="submission" date="2002-03" db="EMBL/GenBank/DDBJ databases">
        <title>Full-length cDNA from Arabidopsis thaliana.</title>
        <authorList>
            <person name="Brover V.V."/>
            <person name="Troukhan M.E."/>
            <person name="Alexandrov N.A."/>
            <person name="Lu Y.-P."/>
            <person name="Flavell R.B."/>
            <person name="Feldmann K.A."/>
        </authorList>
    </citation>
    <scope>NUCLEOTIDE SEQUENCE [LARGE SCALE MRNA]</scope>
</reference>
<reference key="7">
    <citation type="journal article" date="1999" name="Plant J.">
        <title>Nuclear export of proteins in plants: AtXPO1 is the export receptor for leucine-rich nuclear export signals in Arabidopsis thaliana.</title>
        <authorList>
            <person name="Haasen D."/>
            <person name="Koehler C."/>
            <person name="Neuhaus G."/>
            <person name="Merkle T."/>
        </authorList>
    </citation>
    <scope>INTERACTION WITH XPO1</scope>
    <source>
        <strain>cv. Columbia</strain>
    </source>
</reference>
<reference key="8">
    <citation type="journal article" date="2003" name="Plant Mol. Biol.">
        <title>Arabidopsis transportin1 is the nuclear import receptor for the circadian clock-regulated RNA-binding protein AtGRP7.</title>
        <authorList>
            <person name="Ziemienowicz A."/>
            <person name="Haasen D."/>
            <person name="Staiger D."/>
            <person name="Merkle T."/>
        </authorList>
    </citation>
    <scope>INTERACTION WITH TRN1</scope>
</reference>
<reference key="9">
    <citation type="journal article" date="2003" name="Plant Physiol.">
        <title>Analysis of the small GTPase gene superfamily of Arabidopsis.</title>
        <authorList>
            <person name="Vernoud V."/>
            <person name="Horton A.C."/>
            <person name="Yang Z."/>
            <person name="Nielsen E."/>
        </authorList>
    </citation>
    <scope>GENE FAMILY</scope>
    <scope>NOMENCLATURE</scope>
</reference>
<reference key="10">
    <citation type="journal article" date="2006" name="Plant Physiol.">
        <title>Identification and characterization of the Arabidopsis orthologs of nuclear transport factor 2, the nuclear import factor of ran.</title>
        <authorList>
            <person name="Zhao Q."/>
            <person name="Leung S."/>
            <person name="Corbett A.H."/>
            <person name="Meier I."/>
        </authorList>
    </citation>
    <scope>INTERACTION WITH NTF2B</scope>
    <source>
        <strain>cv. Columbia</strain>
    </source>
</reference>
<reference key="11">
    <citation type="journal article" date="2007" name="Biochem. Biophys. Res. Commun.">
        <title>Higher plants possess two different types of ATX1-like copper chaperones.</title>
        <authorList>
            <person name="Puig S."/>
            <person name="Mira H."/>
            <person name="Dorcey E."/>
            <person name="Sancenon V."/>
            <person name="Andres-Colas N."/>
            <person name="Garcia-Molina A."/>
            <person name="Burkhead J.L."/>
            <person name="Gogolin K.A."/>
            <person name="Abdel-Ghany S.E."/>
            <person name="Thiele D.J."/>
            <person name="Ecker J.R."/>
            <person name="Pilon M."/>
            <person name="Penarrubia L."/>
        </authorList>
    </citation>
    <scope>INTERACTION WITH ATX1</scope>
</reference>
<reference key="12">
    <citation type="journal article" date="2008" name="Planta">
        <title>Phytochrome-mediated differential gene expression of plant Ran/TC4 small G-proteins.</title>
        <authorList>
            <person name="Lee Y."/>
            <person name="Kim M.-H."/>
            <person name="Kim S.-K."/>
            <person name="Kim S.-H."/>
        </authorList>
    </citation>
    <scope>INDUCTION</scope>
</reference>
<reference key="13">
    <citation type="journal article" date="2011" name="PLoS Genet.">
        <title>Transportin-SR is required for proper splicing of resistance genes and plant immunity.</title>
        <authorList>
            <person name="Xu S."/>
            <person name="Zhang Z."/>
            <person name="Jing B."/>
            <person name="Gannon P."/>
            <person name="Ding J."/>
            <person name="Xu F."/>
            <person name="Li X."/>
            <person name="Zhang Y."/>
        </authorList>
    </citation>
    <scope>INTERACTION WITH MOS14</scope>
</reference>
<reference key="14">
    <citation type="journal article" date="2013" name="Plant J.">
        <title>An Arabidopsis homolog of importin beta1 is required for ABA response and drought tolerance.</title>
        <authorList>
            <person name="Luo Y."/>
            <person name="Wang Z."/>
            <person name="Ji H."/>
            <person name="Fang H."/>
            <person name="Wang S."/>
            <person name="Tian L."/>
            <person name="Li X."/>
        </authorList>
    </citation>
    <scope>INTERACTION WITH KPNB1</scope>
</reference>
<protein>
    <recommendedName>
        <fullName>GTP-binding nuclear protein Ran-1</fullName>
    </recommendedName>
    <alternativeName>
        <fullName>Ras-related nuclear protein 1</fullName>
    </alternativeName>
</protein>
<gene>
    <name type="primary">RAN1</name>
    <name type="ordered locus">At5g20010</name>
    <name type="ORF">F28I16.160</name>
</gene>
<feature type="chain" id="PRO_0000208717" description="GTP-binding nuclear protein Ran-1">
    <location>
        <begin position="1"/>
        <end position="221"/>
    </location>
</feature>
<feature type="domain" description="Small GTPase Ran-type" evidence="3">
    <location>
        <begin position="10"/>
        <end position="174"/>
    </location>
</feature>
<feature type="region of interest" description="Switch-I" evidence="3">
    <location>
        <begin position="40"/>
        <end position="48"/>
    </location>
</feature>
<feature type="region of interest" description="Switch-II" evidence="3">
    <location>
        <begin position="71"/>
        <end position="87"/>
    </location>
</feature>
<feature type="binding site" evidence="2">
    <location>
        <begin position="21"/>
        <end position="28"/>
    </location>
    <ligand>
        <name>GTP</name>
        <dbReference type="ChEBI" id="CHEBI:37565"/>
    </ligand>
</feature>
<feature type="binding site" evidence="2">
    <location>
        <position position="71"/>
    </location>
    <ligand>
        <name>GTP</name>
        <dbReference type="ChEBI" id="CHEBI:37565"/>
    </ligand>
</feature>
<feature type="binding site" evidence="2">
    <location>
        <begin position="125"/>
        <end position="128"/>
    </location>
    <ligand>
        <name>GTP</name>
        <dbReference type="ChEBI" id="CHEBI:37565"/>
    </ligand>
</feature>
<feature type="binding site" evidence="2">
    <location>
        <begin position="153"/>
        <end position="155"/>
    </location>
    <ligand>
        <name>GTP</name>
        <dbReference type="ChEBI" id="CHEBI:37565"/>
    </ligand>
</feature>
<accession>P41916</accession>
<comment type="function">
    <text evidence="1">GTP-binding protein involved in nucleocytoplasmic transport. Required for the import of protein into the nucleus and also for RNA export. Involved in chromatin condensation and control of cell cycle (By similarity).</text>
</comment>
<comment type="subunit">
    <text evidence="2 4 5 6 7 9 10 11">Found in a nuclear export complex with RanGTP, exportin and pre-miRNA (By similarity). Interacts with RANBP1A and RANBP1B (PubMed:9025305). Interacts with TRN1 (PubMed:14756317). Interacts with ATX1 (PubMed:17223078). Interacts with KPNB1 (PubMed:23582042). Binds to XPO1 (PubMed:10652141). Interacts with MOS14 (PubMed:21738492). Binds to NTF2B (PubMed:16428596).</text>
</comment>
<comment type="subcellular location">
    <subcellularLocation>
        <location evidence="1">Nucleus</location>
    </subcellularLocation>
</comment>
<comment type="induction">
    <text evidence="8">Regulated by light.</text>
</comment>
<comment type="similarity">
    <text evidence="3 12">Belongs to the small GTPase superfamily. Ran family.</text>
</comment>
<dbReference type="EMBL" id="L16789">
    <property type="protein sequence ID" value="AAA32851.1"/>
    <property type="molecule type" value="mRNA"/>
</dbReference>
<dbReference type="EMBL" id="X97379">
    <property type="protein sequence ID" value="CAA66047.1"/>
    <property type="molecule type" value="mRNA"/>
</dbReference>
<dbReference type="EMBL" id="AF296836">
    <property type="status" value="NOT_ANNOTATED_CDS"/>
    <property type="molecule type" value="Genomic_DNA"/>
</dbReference>
<dbReference type="EMBL" id="CP002688">
    <property type="protein sequence ID" value="AED92779.1"/>
    <property type="molecule type" value="Genomic_DNA"/>
</dbReference>
<dbReference type="EMBL" id="AF428417">
    <property type="protein sequence ID" value="AAL16185.1"/>
    <property type="molecule type" value="mRNA"/>
</dbReference>
<dbReference type="EMBL" id="AY125542">
    <property type="protein sequence ID" value="AAM78052.1"/>
    <property type="molecule type" value="mRNA"/>
</dbReference>
<dbReference type="EMBL" id="AY088774">
    <property type="protein sequence ID" value="AAM67087.1"/>
    <property type="molecule type" value="mRNA"/>
</dbReference>
<dbReference type="SMR" id="P41916"/>
<dbReference type="BioGRID" id="17399">
    <property type="interactions" value="11"/>
</dbReference>
<dbReference type="FunCoup" id="P41916">
    <property type="interactions" value="4180"/>
</dbReference>
<dbReference type="IntAct" id="P41916">
    <property type="interactions" value="4"/>
</dbReference>
<dbReference type="STRING" id="3702.P41916"/>
<dbReference type="iPTMnet" id="P41916"/>
<dbReference type="PaxDb" id="3702-AT5G20010.1"/>
<dbReference type="ProteomicsDB" id="236517"/>
<dbReference type="EnsemblPlants" id="AT5G20010.1">
    <property type="protein sequence ID" value="AT5G20010.1"/>
    <property type="gene ID" value="AT5G20010"/>
</dbReference>
<dbReference type="GeneID" id="832123"/>
<dbReference type="Gramene" id="AT5G20010.1">
    <property type="protein sequence ID" value="AT5G20010.1"/>
    <property type="gene ID" value="AT5G20010"/>
</dbReference>
<dbReference type="KEGG" id="ath:AT5G20010"/>
<dbReference type="Araport" id="AT5G20010"/>
<dbReference type="TAIR" id="AT5G20010">
    <property type="gene designation" value="RAN-1"/>
</dbReference>
<dbReference type="eggNOG" id="KOG0096">
    <property type="taxonomic scope" value="Eukaryota"/>
</dbReference>
<dbReference type="HOGENOM" id="CLU_041217_13_0_1"/>
<dbReference type="InParanoid" id="P41916"/>
<dbReference type="OMA" id="QVRACEN"/>
<dbReference type="PhylomeDB" id="P41916"/>
<dbReference type="CD-CODE" id="4299E36E">
    <property type="entry name" value="Nucleolus"/>
</dbReference>
<dbReference type="PRO" id="PR:P41916"/>
<dbReference type="Proteomes" id="UP000006548">
    <property type="component" value="Chromosome 5"/>
</dbReference>
<dbReference type="ExpressionAtlas" id="P41916">
    <property type="expression patterns" value="baseline and differential"/>
</dbReference>
<dbReference type="GO" id="GO:0048046">
    <property type="term" value="C:apoplast"/>
    <property type="evidence" value="ECO:0007005"/>
    <property type="project" value="TAIR"/>
</dbReference>
<dbReference type="GO" id="GO:0005829">
    <property type="term" value="C:cytosol"/>
    <property type="evidence" value="ECO:0000314"/>
    <property type="project" value="TAIR"/>
</dbReference>
<dbReference type="GO" id="GO:0005794">
    <property type="term" value="C:Golgi apparatus"/>
    <property type="evidence" value="ECO:0007005"/>
    <property type="project" value="TAIR"/>
</dbReference>
<dbReference type="GO" id="GO:0005634">
    <property type="term" value="C:nucleus"/>
    <property type="evidence" value="ECO:0007669"/>
    <property type="project" value="UniProtKB-SubCell"/>
</dbReference>
<dbReference type="GO" id="GO:0009505">
    <property type="term" value="C:plant-type cell wall"/>
    <property type="evidence" value="ECO:0007005"/>
    <property type="project" value="TAIR"/>
</dbReference>
<dbReference type="GO" id="GO:0005886">
    <property type="term" value="C:plasma membrane"/>
    <property type="evidence" value="ECO:0007005"/>
    <property type="project" value="TAIR"/>
</dbReference>
<dbReference type="GO" id="GO:0009536">
    <property type="term" value="C:plastid"/>
    <property type="evidence" value="ECO:0007005"/>
    <property type="project" value="TAIR"/>
</dbReference>
<dbReference type="GO" id="GO:0005525">
    <property type="term" value="F:GTP binding"/>
    <property type="evidence" value="ECO:0000250"/>
    <property type="project" value="TAIR"/>
</dbReference>
<dbReference type="GO" id="GO:0003924">
    <property type="term" value="F:GTPase activity"/>
    <property type="evidence" value="ECO:0000250"/>
    <property type="project" value="TAIR"/>
</dbReference>
<dbReference type="GO" id="GO:0003729">
    <property type="term" value="F:mRNA binding"/>
    <property type="evidence" value="ECO:0000314"/>
    <property type="project" value="TAIR"/>
</dbReference>
<dbReference type="GO" id="GO:0042742">
    <property type="term" value="P:defense response to bacterium"/>
    <property type="evidence" value="ECO:0000315"/>
    <property type="project" value="TAIR"/>
</dbReference>
<dbReference type="GO" id="GO:0050832">
    <property type="term" value="P:defense response to fungus"/>
    <property type="evidence" value="ECO:0000315"/>
    <property type="project" value="TAIR"/>
</dbReference>
<dbReference type="GO" id="GO:0006606">
    <property type="term" value="P:protein import into nucleus"/>
    <property type="evidence" value="ECO:0000304"/>
    <property type="project" value="TAIR"/>
</dbReference>
<dbReference type="CDD" id="cd00877">
    <property type="entry name" value="Ran"/>
    <property type="match status" value="1"/>
</dbReference>
<dbReference type="FunFam" id="3.40.50.300:FF:000369">
    <property type="entry name" value="GTP-binding nuclear protein"/>
    <property type="match status" value="1"/>
</dbReference>
<dbReference type="Gene3D" id="3.40.50.300">
    <property type="entry name" value="P-loop containing nucleotide triphosphate hydrolases"/>
    <property type="match status" value="1"/>
</dbReference>
<dbReference type="InterPro" id="IPR027417">
    <property type="entry name" value="P-loop_NTPase"/>
</dbReference>
<dbReference type="InterPro" id="IPR002041">
    <property type="entry name" value="Ran_GTPase"/>
</dbReference>
<dbReference type="InterPro" id="IPR005225">
    <property type="entry name" value="Small_GTP-bd"/>
</dbReference>
<dbReference type="InterPro" id="IPR001806">
    <property type="entry name" value="Small_GTPase"/>
</dbReference>
<dbReference type="NCBIfam" id="TIGR00231">
    <property type="entry name" value="small_GTP"/>
    <property type="match status" value="1"/>
</dbReference>
<dbReference type="PANTHER" id="PTHR24071:SF42">
    <property type="entry name" value="GTP-BINDING NUCLEAR PROTEIN RAN-1-RELATED"/>
    <property type="match status" value="1"/>
</dbReference>
<dbReference type="PANTHER" id="PTHR24071">
    <property type="entry name" value="RAN GTPASE"/>
    <property type="match status" value="1"/>
</dbReference>
<dbReference type="Pfam" id="PF00071">
    <property type="entry name" value="Ras"/>
    <property type="match status" value="1"/>
</dbReference>
<dbReference type="PRINTS" id="PR00627">
    <property type="entry name" value="GTPRANTC4"/>
</dbReference>
<dbReference type="SMART" id="SM00175">
    <property type="entry name" value="RAB"/>
    <property type="match status" value="1"/>
</dbReference>
<dbReference type="SMART" id="SM00176">
    <property type="entry name" value="RAN"/>
    <property type="match status" value="1"/>
</dbReference>
<dbReference type="SMART" id="SM00173">
    <property type="entry name" value="RAS"/>
    <property type="match status" value="1"/>
</dbReference>
<dbReference type="SMART" id="SM00174">
    <property type="entry name" value="RHO"/>
    <property type="match status" value="1"/>
</dbReference>
<dbReference type="SUPFAM" id="SSF52540">
    <property type="entry name" value="P-loop containing nucleoside triphosphate hydrolases"/>
    <property type="match status" value="1"/>
</dbReference>
<dbReference type="PROSITE" id="PS51418">
    <property type="entry name" value="RAN"/>
    <property type="match status" value="1"/>
</dbReference>
<sequence>MALPNQQTVDYPSFKLVIVGDGGTGKTTFVKRHLTGEFEKKYEPTIGVEVHPLDFFTNCGKIRFYCWDTAGQEKFGGLRDGYYIHGQCAIIMFDVTARLTYKNVPTWHRDLCRVCENIPIVLCGNKVDVKNRQVKAKQVTFHRKKNLQYYEISAKSNYNFEKPFLYLARKLAGDQNLHFVETPALAPPEVHIDIADQQKNEAELLQAAAQPLPDDDDDIFE</sequence>
<proteinExistence type="evidence at protein level"/>
<keyword id="KW-0342">GTP-binding</keyword>
<keyword id="KW-0547">Nucleotide-binding</keyword>
<keyword id="KW-0539">Nucleus</keyword>
<keyword id="KW-0653">Protein transport</keyword>
<keyword id="KW-1185">Reference proteome</keyword>
<keyword id="KW-0813">Transport</keyword>